<name>RL21_CHLCV</name>
<accession>Q824F5</accession>
<comment type="function">
    <text evidence="1">This protein binds to 23S rRNA in the presence of protein L20.</text>
</comment>
<comment type="subunit">
    <text evidence="1">Part of the 50S ribosomal subunit. Contacts protein L20.</text>
</comment>
<comment type="similarity">
    <text evidence="1">Belongs to the bacterial ribosomal protein bL21 family.</text>
</comment>
<protein>
    <recommendedName>
        <fullName evidence="1">Large ribosomal subunit protein bL21</fullName>
    </recommendedName>
    <alternativeName>
        <fullName evidence="2">50S ribosomal protein L21</fullName>
    </alternativeName>
</protein>
<dbReference type="EMBL" id="AE015925">
    <property type="protein sequence ID" value="AAP04948.1"/>
    <property type="molecule type" value="Genomic_DNA"/>
</dbReference>
<dbReference type="RefSeq" id="WP_011006167.1">
    <property type="nucleotide sequence ID" value="NC_003361.3"/>
</dbReference>
<dbReference type="SMR" id="Q824F5"/>
<dbReference type="STRING" id="227941.CCA_00197"/>
<dbReference type="KEGG" id="cca:CCA_00197"/>
<dbReference type="eggNOG" id="COG0261">
    <property type="taxonomic scope" value="Bacteria"/>
</dbReference>
<dbReference type="HOGENOM" id="CLU_061463_3_2_0"/>
<dbReference type="OrthoDB" id="9813334at2"/>
<dbReference type="Proteomes" id="UP000002193">
    <property type="component" value="Chromosome"/>
</dbReference>
<dbReference type="GO" id="GO:0005737">
    <property type="term" value="C:cytoplasm"/>
    <property type="evidence" value="ECO:0007669"/>
    <property type="project" value="UniProtKB-ARBA"/>
</dbReference>
<dbReference type="GO" id="GO:1990904">
    <property type="term" value="C:ribonucleoprotein complex"/>
    <property type="evidence" value="ECO:0007669"/>
    <property type="project" value="UniProtKB-KW"/>
</dbReference>
<dbReference type="GO" id="GO:0005840">
    <property type="term" value="C:ribosome"/>
    <property type="evidence" value="ECO:0007669"/>
    <property type="project" value="UniProtKB-KW"/>
</dbReference>
<dbReference type="GO" id="GO:0019843">
    <property type="term" value="F:rRNA binding"/>
    <property type="evidence" value="ECO:0007669"/>
    <property type="project" value="UniProtKB-UniRule"/>
</dbReference>
<dbReference type="GO" id="GO:0003735">
    <property type="term" value="F:structural constituent of ribosome"/>
    <property type="evidence" value="ECO:0007669"/>
    <property type="project" value="InterPro"/>
</dbReference>
<dbReference type="GO" id="GO:0006412">
    <property type="term" value="P:translation"/>
    <property type="evidence" value="ECO:0007669"/>
    <property type="project" value="UniProtKB-UniRule"/>
</dbReference>
<dbReference type="HAMAP" id="MF_01363">
    <property type="entry name" value="Ribosomal_bL21"/>
    <property type="match status" value="1"/>
</dbReference>
<dbReference type="InterPro" id="IPR028909">
    <property type="entry name" value="bL21-like"/>
</dbReference>
<dbReference type="InterPro" id="IPR036164">
    <property type="entry name" value="bL21-like_sf"/>
</dbReference>
<dbReference type="InterPro" id="IPR001787">
    <property type="entry name" value="Ribosomal_bL21"/>
</dbReference>
<dbReference type="InterPro" id="IPR018258">
    <property type="entry name" value="Ribosomal_bL21_CS"/>
</dbReference>
<dbReference type="NCBIfam" id="TIGR00061">
    <property type="entry name" value="L21"/>
    <property type="match status" value="1"/>
</dbReference>
<dbReference type="PANTHER" id="PTHR21349">
    <property type="entry name" value="50S RIBOSOMAL PROTEIN L21"/>
    <property type="match status" value="1"/>
</dbReference>
<dbReference type="PANTHER" id="PTHR21349:SF0">
    <property type="entry name" value="LARGE RIBOSOMAL SUBUNIT PROTEIN BL21M"/>
    <property type="match status" value="1"/>
</dbReference>
<dbReference type="Pfam" id="PF00829">
    <property type="entry name" value="Ribosomal_L21p"/>
    <property type="match status" value="1"/>
</dbReference>
<dbReference type="SUPFAM" id="SSF141091">
    <property type="entry name" value="L21p-like"/>
    <property type="match status" value="1"/>
</dbReference>
<dbReference type="PROSITE" id="PS01169">
    <property type="entry name" value="RIBOSOMAL_L21"/>
    <property type="match status" value="1"/>
</dbReference>
<evidence type="ECO:0000255" key="1">
    <source>
        <dbReference type="HAMAP-Rule" id="MF_01363"/>
    </source>
</evidence>
<evidence type="ECO:0000305" key="2"/>
<sequence length="106" mass="12020">MKSYAIIQTGSKQYQVSEGDVIDVELLDGISEGQEIVFDQVLFTFDGSKVSLGTPIVKDAVVKGQLLSQVRGEKVTAYKYKRRKNYHRKTGHRQNYLRVKISNLVI</sequence>
<feature type="chain" id="PRO_0000270650" description="Large ribosomal subunit protein bL21">
    <location>
        <begin position="1"/>
        <end position="106"/>
    </location>
</feature>
<keyword id="KW-0687">Ribonucleoprotein</keyword>
<keyword id="KW-0689">Ribosomal protein</keyword>
<keyword id="KW-0694">RNA-binding</keyword>
<keyword id="KW-0699">rRNA-binding</keyword>
<gene>
    <name evidence="1" type="primary">rplU</name>
    <name type="ordered locus">CCA_00197</name>
</gene>
<organism>
    <name type="scientific">Chlamydia caviae (strain ATCC VR-813 / DSM 19441 / 03DC25 / GPIC)</name>
    <name type="common">Chlamydophila caviae</name>
    <dbReference type="NCBI Taxonomy" id="227941"/>
    <lineage>
        <taxon>Bacteria</taxon>
        <taxon>Pseudomonadati</taxon>
        <taxon>Chlamydiota</taxon>
        <taxon>Chlamydiia</taxon>
        <taxon>Chlamydiales</taxon>
        <taxon>Chlamydiaceae</taxon>
        <taxon>Chlamydia/Chlamydophila group</taxon>
        <taxon>Chlamydia</taxon>
    </lineage>
</organism>
<proteinExistence type="inferred from homology"/>
<reference key="1">
    <citation type="journal article" date="2003" name="Nucleic Acids Res.">
        <title>Genome sequence of Chlamydophila caviae (Chlamydia psittaci GPIC): examining the role of niche-specific genes in the evolution of the Chlamydiaceae.</title>
        <authorList>
            <person name="Read T.D."/>
            <person name="Myers G.S.A."/>
            <person name="Brunham R.C."/>
            <person name="Nelson W.C."/>
            <person name="Paulsen I.T."/>
            <person name="Heidelberg J.F."/>
            <person name="Holtzapple E.K."/>
            <person name="Khouri H.M."/>
            <person name="Federova N.B."/>
            <person name="Carty H.A."/>
            <person name="Umayam L.A."/>
            <person name="Haft D.H."/>
            <person name="Peterson J.D."/>
            <person name="Beanan M.J."/>
            <person name="White O."/>
            <person name="Salzberg S.L."/>
            <person name="Hsia R.-C."/>
            <person name="McClarty G."/>
            <person name="Rank R.G."/>
            <person name="Bavoil P.M."/>
            <person name="Fraser C.M."/>
        </authorList>
    </citation>
    <scope>NUCLEOTIDE SEQUENCE [LARGE SCALE GENOMIC DNA]</scope>
    <source>
        <strain>ATCC VR-813 / DSM 19441 / 03DC25 / GPIC</strain>
    </source>
</reference>